<comment type="similarity">
    <text evidence="1">Belongs to the UPF0434 family.</text>
</comment>
<gene>
    <name type="ordered locus">RL4569</name>
</gene>
<evidence type="ECO:0000255" key="1">
    <source>
        <dbReference type="HAMAP-Rule" id="MF_01187"/>
    </source>
</evidence>
<protein>
    <recommendedName>
        <fullName evidence="1">UPF0434 protein RL4569</fullName>
    </recommendedName>
</protein>
<accession>Q1MAI6</accession>
<reference key="1">
    <citation type="journal article" date="2006" name="Genome Biol.">
        <title>The genome of Rhizobium leguminosarum has recognizable core and accessory components.</title>
        <authorList>
            <person name="Young J.P.W."/>
            <person name="Crossman L.C."/>
            <person name="Johnston A.W.B."/>
            <person name="Thomson N.R."/>
            <person name="Ghazoui Z.F."/>
            <person name="Hull K.H."/>
            <person name="Wexler M."/>
            <person name="Curson A.R.J."/>
            <person name="Todd J.D."/>
            <person name="Poole P.S."/>
            <person name="Mauchline T.H."/>
            <person name="East A.K."/>
            <person name="Quail M.A."/>
            <person name="Churcher C."/>
            <person name="Arrowsmith C."/>
            <person name="Cherevach I."/>
            <person name="Chillingworth T."/>
            <person name="Clarke K."/>
            <person name="Cronin A."/>
            <person name="Davis P."/>
            <person name="Fraser A."/>
            <person name="Hance Z."/>
            <person name="Hauser H."/>
            <person name="Jagels K."/>
            <person name="Moule S."/>
            <person name="Mungall K."/>
            <person name="Norbertczak H."/>
            <person name="Rabbinowitsch E."/>
            <person name="Sanders M."/>
            <person name="Simmonds M."/>
            <person name="Whitehead S."/>
            <person name="Parkhill J."/>
        </authorList>
    </citation>
    <scope>NUCLEOTIDE SEQUENCE [LARGE SCALE GENOMIC DNA]</scope>
    <source>
        <strain>DSM 114642 / LMG 32736 / 3841</strain>
    </source>
</reference>
<organism>
    <name type="scientific">Rhizobium johnstonii (strain DSM 114642 / LMG 32736 / 3841)</name>
    <name type="common">Rhizobium leguminosarum bv. viciae</name>
    <dbReference type="NCBI Taxonomy" id="216596"/>
    <lineage>
        <taxon>Bacteria</taxon>
        <taxon>Pseudomonadati</taxon>
        <taxon>Pseudomonadota</taxon>
        <taxon>Alphaproteobacteria</taxon>
        <taxon>Hyphomicrobiales</taxon>
        <taxon>Rhizobiaceae</taxon>
        <taxon>Rhizobium/Agrobacterium group</taxon>
        <taxon>Rhizobium</taxon>
        <taxon>Rhizobium johnstonii</taxon>
    </lineage>
</organism>
<name>Y4569_RHIJ3</name>
<proteinExistence type="inferred from homology"/>
<dbReference type="EMBL" id="AM236080">
    <property type="protein sequence ID" value="CAK10052.1"/>
    <property type="molecule type" value="Genomic_DNA"/>
</dbReference>
<dbReference type="RefSeq" id="WP_011653922.1">
    <property type="nucleotide sequence ID" value="NC_008380.1"/>
</dbReference>
<dbReference type="SMR" id="Q1MAI6"/>
<dbReference type="EnsemblBacteria" id="CAK10052">
    <property type="protein sequence ID" value="CAK10052"/>
    <property type="gene ID" value="RL4569"/>
</dbReference>
<dbReference type="KEGG" id="rle:RL4569"/>
<dbReference type="eggNOG" id="COG2835">
    <property type="taxonomic scope" value="Bacteria"/>
</dbReference>
<dbReference type="HOGENOM" id="CLU_155659_2_2_5"/>
<dbReference type="Proteomes" id="UP000006575">
    <property type="component" value="Chromosome"/>
</dbReference>
<dbReference type="GO" id="GO:0005829">
    <property type="term" value="C:cytosol"/>
    <property type="evidence" value="ECO:0007669"/>
    <property type="project" value="TreeGrafter"/>
</dbReference>
<dbReference type="FunFam" id="2.20.25.10:FF:000002">
    <property type="entry name" value="UPF0434 protein YcaR"/>
    <property type="match status" value="1"/>
</dbReference>
<dbReference type="Gene3D" id="2.20.25.10">
    <property type="match status" value="1"/>
</dbReference>
<dbReference type="HAMAP" id="MF_01187">
    <property type="entry name" value="UPF0434"/>
    <property type="match status" value="1"/>
</dbReference>
<dbReference type="InterPro" id="IPR005651">
    <property type="entry name" value="Trm112-like"/>
</dbReference>
<dbReference type="PANTHER" id="PTHR33505:SF4">
    <property type="entry name" value="PROTEIN PREY, MITOCHONDRIAL"/>
    <property type="match status" value="1"/>
</dbReference>
<dbReference type="PANTHER" id="PTHR33505">
    <property type="entry name" value="ZGC:162634"/>
    <property type="match status" value="1"/>
</dbReference>
<dbReference type="Pfam" id="PF03966">
    <property type="entry name" value="Trm112p"/>
    <property type="match status" value="1"/>
</dbReference>
<dbReference type="SUPFAM" id="SSF158997">
    <property type="entry name" value="Trm112p-like"/>
    <property type="match status" value="1"/>
</dbReference>
<feature type="chain" id="PRO_0000291145" description="UPF0434 protein RL4569">
    <location>
        <begin position="1"/>
        <end position="62"/>
    </location>
</feature>
<sequence>MDEKLSRVDPKLLDLLVCPLSKGRLSYDREHNELVSEKARLAYPIRDGIPIMLMSEARRLDD</sequence>